<proteinExistence type="inferred from homology"/>
<dbReference type="EC" id="6.3.2.2" evidence="1"/>
<dbReference type="EMBL" id="CP000378">
    <property type="protein sequence ID" value="ABF74917.1"/>
    <property type="molecule type" value="Genomic_DNA"/>
</dbReference>
<dbReference type="SMR" id="Q1BZN8"/>
<dbReference type="HOGENOM" id="CLU_044848_1_1_4"/>
<dbReference type="GO" id="GO:0005524">
    <property type="term" value="F:ATP binding"/>
    <property type="evidence" value="ECO:0007669"/>
    <property type="project" value="UniProtKB-KW"/>
</dbReference>
<dbReference type="GO" id="GO:0004357">
    <property type="term" value="F:glutamate-cysteine ligase activity"/>
    <property type="evidence" value="ECO:0007669"/>
    <property type="project" value="UniProtKB-EC"/>
</dbReference>
<dbReference type="GO" id="GO:0042398">
    <property type="term" value="P:modified amino acid biosynthetic process"/>
    <property type="evidence" value="ECO:0007669"/>
    <property type="project" value="InterPro"/>
</dbReference>
<dbReference type="Gene3D" id="3.30.590.20">
    <property type="match status" value="1"/>
</dbReference>
<dbReference type="HAMAP" id="MF_01609">
    <property type="entry name" value="Glu_cys_ligase_2"/>
    <property type="match status" value="1"/>
</dbReference>
<dbReference type="InterPro" id="IPR050141">
    <property type="entry name" value="GCL_type2/YbdK_subfam"/>
</dbReference>
<dbReference type="InterPro" id="IPR006336">
    <property type="entry name" value="GCS2"/>
</dbReference>
<dbReference type="InterPro" id="IPR014746">
    <property type="entry name" value="Gln_synth/guanido_kin_cat_dom"/>
</dbReference>
<dbReference type="InterPro" id="IPR011793">
    <property type="entry name" value="YbdK"/>
</dbReference>
<dbReference type="NCBIfam" id="TIGR02050">
    <property type="entry name" value="gshA_cyan_rel"/>
    <property type="match status" value="1"/>
</dbReference>
<dbReference type="NCBIfam" id="NF010040">
    <property type="entry name" value="PRK13516.1"/>
    <property type="match status" value="1"/>
</dbReference>
<dbReference type="PANTHER" id="PTHR36510">
    <property type="entry name" value="GLUTAMATE--CYSTEINE LIGASE 2-RELATED"/>
    <property type="match status" value="1"/>
</dbReference>
<dbReference type="PANTHER" id="PTHR36510:SF1">
    <property type="entry name" value="GLUTAMATE--CYSTEINE LIGASE 2-RELATED"/>
    <property type="match status" value="1"/>
</dbReference>
<dbReference type="Pfam" id="PF04107">
    <property type="entry name" value="GCS2"/>
    <property type="match status" value="1"/>
</dbReference>
<dbReference type="SUPFAM" id="SSF55931">
    <property type="entry name" value="Glutamine synthetase/guanido kinase"/>
    <property type="match status" value="1"/>
</dbReference>
<sequence>MALETFVNSEPFTFGVELEIQVVNTHNYDLTKAASDLMRLIQGETFPGNITPEITESMIELSTGICHSHEQAVSELHAIRDVLVKAADQLNVGLAGGGTHAFQQWSDRQIYDAPRFQYISELYGYLAKQFTVFGQHVHIGCPDPDSALFLLHSMSRFIPHFIALSASSPFVQNVDTGFHSARLNSVFAFPLSGRAPFVLTWDSFEEYFTKMVNTGVVNSMKDFYWDIRPKPGYGTIEVRVMDTPLSVDRAAAIACYIQTLARYLLTDRPLKLSEDDYLVYTFNRFEACRFGLEGTCVNPQTGERRTIAEDILDTLDRIAPHAAALGSRAALDEIGALAKARVNDASWLRTVFKQEKSLNETVRQQCLRWRE</sequence>
<name>GCS2_BURO1</name>
<evidence type="ECO:0000255" key="1">
    <source>
        <dbReference type="HAMAP-Rule" id="MF_01609"/>
    </source>
</evidence>
<organism>
    <name type="scientific">Burkholderia orbicola (strain AU 1054)</name>
    <dbReference type="NCBI Taxonomy" id="331271"/>
    <lineage>
        <taxon>Bacteria</taxon>
        <taxon>Pseudomonadati</taxon>
        <taxon>Pseudomonadota</taxon>
        <taxon>Betaproteobacteria</taxon>
        <taxon>Burkholderiales</taxon>
        <taxon>Burkholderiaceae</taxon>
        <taxon>Burkholderia</taxon>
        <taxon>Burkholderia cepacia complex</taxon>
        <taxon>Burkholderia orbicola</taxon>
    </lineage>
</organism>
<keyword id="KW-0067">ATP-binding</keyword>
<keyword id="KW-0436">Ligase</keyword>
<keyword id="KW-0547">Nucleotide-binding</keyword>
<reference key="1">
    <citation type="submission" date="2006-05" db="EMBL/GenBank/DDBJ databases">
        <title>Complete sequence of chromosome 1 of Burkholderia cenocepacia AU 1054.</title>
        <authorList>
            <consortium name="US DOE Joint Genome Institute"/>
            <person name="Copeland A."/>
            <person name="Lucas S."/>
            <person name="Lapidus A."/>
            <person name="Barry K."/>
            <person name="Detter J.C."/>
            <person name="Glavina del Rio T."/>
            <person name="Hammon N."/>
            <person name="Israni S."/>
            <person name="Dalin E."/>
            <person name="Tice H."/>
            <person name="Pitluck S."/>
            <person name="Chain P."/>
            <person name="Malfatti S."/>
            <person name="Shin M."/>
            <person name="Vergez L."/>
            <person name="Schmutz J."/>
            <person name="Larimer F."/>
            <person name="Land M."/>
            <person name="Hauser L."/>
            <person name="Kyrpides N."/>
            <person name="Lykidis A."/>
            <person name="LiPuma J.J."/>
            <person name="Konstantinidis K."/>
            <person name="Tiedje J.M."/>
            <person name="Richardson P."/>
        </authorList>
    </citation>
    <scope>NUCLEOTIDE SEQUENCE [LARGE SCALE GENOMIC DNA]</scope>
    <source>
        <strain>AU 1054</strain>
    </source>
</reference>
<comment type="function">
    <text evidence="1">ATP-dependent carboxylate-amine ligase which exhibits weak glutamate--cysteine ligase activity.</text>
</comment>
<comment type="catalytic activity">
    <reaction evidence="1">
        <text>L-cysteine + L-glutamate + ATP = gamma-L-glutamyl-L-cysteine + ADP + phosphate + H(+)</text>
        <dbReference type="Rhea" id="RHEA:13285"/>
        <dbReference type="ChEBI" id="CHEBI:15378"/>
        <dbReference type="ChEBI" id="CHEBI:29985"/>
        <dbReference type="ChEBI" id="CHEBI:30616"/>
        <dbReference type="ChEBI" id="CHEBI:35235"/>
        <dbReference type="ChEBI" id="CHEBI:43474"/>
        <dbReference type="ChEBI" id="CHEBI:58173"/>
        <dbReference type="ChEBI" id="CHEBI:456216"/>
        <dbReference type="EC" id="6.3.2.2"/>
    </reaction>
</comment>
<comment type="similarity">
    <text evidence="1">Belongs to the glutamate--cysteine ligase type 2 family. YbdK subfamily.</text>
</comment>
<protein>
    <recommendedName>
        <fullName evidence="1">Putative glutamate--cysteine ligase 2</fullName>
        <ecNumber evidence="1">6.3.2.2</ecNumber>
    </recommendedName>
    <alternativeName>
        <fullName evidence="1">Gamma-glutamylcysteine synthetase 2</fullName>
        <shortName evidence="1">GCS 2</shortName>
        <shortName evidence="1">Gamma-GCS 2</shortName>
    </alternativeName>
</protein>
<gene>
    <name type="ordered locus">Bcen_0001</name>
</gene>
<feature type="chain" id="PRO_0000255793" description="Putative glutamate--cysteine ligase 2">
    <location>
        <begin position="1"/>
        <end position="371"/>
    </location>
</feature>
<accession>Q1BZN8</accession>